<accession>B1LA87</accession>
<protein>
    <recommendedName>
        <fullName evidence="1">Uronate isomerase</fullName>
        <ecNumber evidence="1">5.3.1.12</ecNumber>
    </recommendedName>
    <alternativeName>
        <fullName evidence="1">Glucuronate isomerase</fullName>
    </alternativeName>
    <alternativeName>
        <fullName evidence="1">Uronic isomerase</fullName>
    </alternativeName>
</protein>
<reference key="1">
    <citation type="journal article" date="2011" name="J. Bacteriol.">
        <title>Genome sequence of Thermotoga sp. strain RQ2, a hyperthermophilic bacterium isolated from a geothermally heated region of the seafloor near Ribeira Quente, the Azores.</title>
        <authorList>
            <person name="Swithers K.S."/>
            <person name="DiPippo J.L."/>
            <person name="Bruce D.C."/>
            <person name="Detter C."/>
            <person name="Tapia R."/>
            <person name="Han S."/>
            <person name="Saunders E."/>
            <person name="Goodwin L.A."/>
            <person name="Han J."/>
            <person name="Woyke T."/>
            <person name="Pitluck S."/>
            <person name="Pennacchio L."/>
            <person name="Nolan M."/>
            <person name="Mikhailova N."/>
            <person name="Lykidis A."/>
            <person name="Land M.L."/>
            <person name="Brettin T."/>
            <person name="Stetter K.O."/>
            <person name="Nelson K.E."/>
            <person name="Gogarten J.P."/>
            <person name="Noll K.M."/>
        </authorList>
    </citation>
    <scope>NUCLEOTIDE SEQUENCE [LARGE SCALE GENOMIC DNA]</scope>
    <source>
        <strain>RQ2</strain>
    </source>
</reference>
<evidence type="ECO:0000255" key="1">
    <source>
        <dbReference type="HAMAP-Rule" id="MF_00675"/>
    </source>
</evidence>
<organism>
    <name type="scientific">Thermotoga sp. (strain RQ2)</name>
    <dbReference type="NCBI Taxonomy" id="126740"/>
    <lineage>
        <taxon>Bacteria</taxon>
        <taxon>Thermotogati</taxon>
        <taxon>Thermotogota</taxon>
        <taxon>Thermotogae</taxon>
        <taxon>Thermotogales</taxon>
        <taxon>Thermotogaceae</taxon>
        <taxon>Thermotoga</taxon>
    </lineage>
</organism>
<dbReference type="EC" id="5.3.1.12" evidence="1"/>
<dbReference type="EMBL" id="CP000969">
    <property type="protein sequence ID" value="ACB09235.1"/>
    <property type="molecule type" value="Genomic_DNA"/>
</dbReference>
<dbReference type="RefSeq" id="WP_012310799.1">
    <property type="nucleotide sequence ID" value="NC_010483.1"/>
</dbReference>
<dbReference type="SMR" id="B1LA87"/>
<dbReference type="KEGG" id="trq:TRQ2_0883"/>
<dbReference type="HOGENOM" id="CLU_044465_1_0_0"/>
<dbReference type="UniPathway" id="UPA00246"/>
<dbReference type="Proteomes" id="UP000001687">
    <property type="component" value="Chromosome"/>
</dbReference>
<dbReference type="GO" id="GO:0008880">
    <property type="term" value="F:glucuronate isomerase activity"/>
    <property type="evidence" value="ECO:0007669"/>
    <property type="project" value="UniProtKB-UniRule"/>
</dbReference>
<dbReference type="GO" id="GO:0019698">
    <property type="term" value="P:D-galacturonate catabolic process"/>
    <property type="evidence" value="ECO:0007669"/>
    <property type="project" value="TreeGrafter"/>
</dbReference>
<dbReference type="GO" id="GO:0042840">
    <property type="term" value="P:D-glucuronate catabolic process"/>
    <property type="evidence" value="ECO:0007669"/>
    <property type="project" value="TreeGrafter"/>
</dbReference>
<dbReference type="Gene3D" id="3.20.20.140">
    <property type="entry name" value="Metal-dependent hydrolases"/>
    <property type="match status" value="1"/>
</dbReference>
<dbReference type="Gene3D" id="1.10.2020.10">
    <property type="entry name" value="uronate isomerase, domain 2, chain A"/>
    <property type="match status" value="1"/>
</dbReference>
<dbReference type="HAMAP" id="MF_00675">
    <property type="entry name" value="UxaC"/>
    <property type="match status" value="1"/>
</dbReference>
<dbReference type="InterPro" id="IPR032466">
    <property type="entry name" value="Metal_Hydrolase"/>
</dbReference>
<dbReference type="InterPro" id="IPR003766">
    <property type="entry name" value="Uronate_isomerase"/>
</dbReference>
<dbReference type="NCBIfam" id="NF002794">
    <property type="entry name" value="PRK02925.1"/>
    <property type="match status" value="1"/>
</dbReference>
<dbReference type="PANTHER" id="PTHR30068">
    <property type="entry name" value="URONATE ISOMERASE"/>
    <property type="match status" value="1"/>
</dbReference>
<dbReference type="PANTHER" id="PTHR30068:SF4">
    <property type="entry name" value="URONATE ISOMERASE"/>
    <property type="match status" value="1"/>
</dbReference>
<dbReference type="Pfam" id="PF02614">
    <property type="entry name" value="UxaC"/>
    <property type="match status" value="1"/>
</dbReference>
<dbReference type="SUPFAM" id="SSF51556">
    <property type="entry name" value="Metallo-dependent hydrolases"/>
    <property type="match status" value="1"/>
</dbReference>
<gene>
    <name evidence="1" type="primary">uxaC</name>
    <name type="ordered locus">TRQ2_0883</name>
</gene>
<proteinExistence type="inferred from homology"/>
<name>UXAC_THESQ</name>
<feature type="chain" id="PRO_1000131611" description="Uronate isomerase">
    <location>
        <begin position="1"/>
        <end position="451"/>
    </location>
</feature>
<comment type="catalytic activity">
    <reaction evidence="1">
        <text>D-glucuronate = D-fructuronate</text>
        <dbReference type="Rhea" id="RHEA:13049"/>
        <dbReference type="ChEBI" id="CHEBI:58720"/>
        <dbReference type="ChEBI" id="CHEBI:59863"/>
        <dbReference type="EC" id="5.3.1.12"/>
    </reaction>
</comment>
<comment type="catalytic activity">
    <reaction evidence="1">
        <text>aldehydo-D-galacturonate = keto-D-tagaturonate</text>
        <dbReference type="Rhea" id="RHEA:27702"/>
        <dbReference type="ChEBI" id="CHEBI:12952"/>
        <dbReference type="ChEBI" id="CHEBI:17886"/>
        <dbReference type="EC" id="5.3.1.12"/>
    </reaction>
</comment>
<comment type="pathway">
    <text evidence="1">Carbohydrate metabolism; pentose and glucuronate interconversion.</text>
</comment>
<comment type="similarity">
    <text evidence="1">Belongs to the metallo-dependent hydrolases superfamily. Uronate isomerase family.</text>
</comment>
<sequence length="451" mass="52393">MFLGEDYLLTNRAAVRLFNEVKDLPIVDPHNHLDAKDIVENKPWSDIWEVEGATDHYVWELMRRCGISEEYITGSRSNKEKWLALAKVFPRFVGNPTYEWIHLDLWRRFNIKKVISEETAEEIWEETKKKLPEMTPQKLLRDMKVEILCTTDDPVSTLEHHRKAKEVVEGVTILPTWRPDRAMNVDKEGWKEYVEKMGERYGEDTSTLEGFLSALWKSHEHFKEHGCVASDHALLEPSVYYVDENRARAVHEKAFSGEKLTQDEINDYKAFMMIQFGKMNQETNWVTQLHIGALRDYRDSLFKTLGPDSGGDISTNFLRIAEGLRYFLNEFDGKLKIVLYVLDPTHLPTIATIARAFPNVYVGAPWWFNDSPFGMEMHLKYLASVDLLYNLAGMVTDSRKLLSFGSRTEMFRRVLSNVVGEMVEKGQIPIKEARELVKHVSYDGPKSLFFR</sequence>
<keyword id="KW-0413">Isomerase</keyword>